<dbReference type="EC" id="2.7.7.3" evidence="1"/>
<dbReference type="EMBL" id="U52844">
    <property type="protein sequence ID" value="AAD28804.1"/>
    <property type="molecule type" value="Genomic_DNA"/>
</dbReference>
<dbReference type="RefSeq" id="WP_033645183.1">
    <property type="nucleotide sequence ID" value="NZ_WUUW01000021.1"/>
</dbReference>
<dbReference type="SMR" id="Q9X980"/>
<dbReference type="STRING" id="273526.SMDB11_4063"/>
<dbReference type="GeneID" id="64305946"/>
<dbReference type="UniPathway" id="UPA00241">
    <property type="reaction ID" value="UER00355"/>
</dbReference>
<dbReference type="GO" id="GO:0005737">
    <property type="term" value="C:cytoplasm"/>
    <property type="evidence" value="ECO:0007669"/>
    <property type="project" value="UniProtKB-SubCell"/>
</dbReference>
<dbReference type="GO" id="GO:0005524">
    <property type="term" value="F:ATP binding"/>
    <property type="evidence" value="ECO:0007669"/>
    <property type="project" value="UniProtKB-KW"/>
</dbReference>
<dbReference type="GO" id="GO:0004595">
    <property type="term" value="F:pantetheine-phosphate adenylyltransferase activity"/>
    <property type="evidence" value="ECO:0007669"/>
    <property type="project" value="UniProtKB-UniRule"/>
</dbReference>
<dbReference type="GO" id="GO:0015937">
    <property type="term" value="P:coenzyme A biosynthetic process"/>
    <property type="evidence" value="ECO:0007669"/>
    <property type="project" value="UniProtKB-UniRule"/>
</dbReference>
<dbReference type="CDD" id="cd02163">
    <property type="entry name" value="PPAT"/>
    <property type="match status" value="1"/>
</dbReference>
<dbReference type="FunFam" id="3.40.50.620:FF:000012">
    <property type="entry name" value="Phosphopantetheine adenylyltransferase"/>
    <property type="match status" value="1"/>
</dbReference>
<dbReference type="Gene3D" id="3.40.50.620">
    <property type="entry name" value="HUPs"/>
    <property type="match status" value="1"/>
</dbReference>
<dbReference type="HAMAP" id="MF_00151">
    <property type="entry name" value="PPAT_bact"/>
    <property type="match status" value="1"/>
</dbReference>
<dbReference type="InterPro" id="IPR004821">
    <property type="entry name" value="Cyt_trans-like"/>
</dbReference>
<dbReference type="InterPro" id="IPR001980">
    <property type="entry name" value="PPAT"/>
</dbReference>
<dbReference type="InterPro" id="IPR014729">
    <property type="entry name" value="Rossmann-like_a/b/a_fold"/>
</dbReference>
<dbReference type="NCBIfam" id="TIGR01510">
    <property type="entry name" value="coaD_prev_kdtB"/>
    <property type="match status" value="1"/>
</dbReference>
<dbReference type="NCBIfam" id="TIGR00125">
    <property type="entry name" value="cyt_tran_rel"/>
    <property type="match status" value="1"/>
</dbReference>
<dbReference type="PANTHER" id="PTHR21342">
    <property type="entry name" value="PHOSPHOPANTETHEINE ADENYLYLTRANSFERASE"/>
    <property type="match status" value="1"/>
</dbReference>
<dbReference type="PANTHER" id="PTHR21342:SF1">
    <property type="entry name" value="PHOSPHOPANTETHEINE ADENYLYLTRANSFERASE"/>
    <property type="match status" value="1"/>
</dbReference>
<dbReference type="Pfam" id="PF01467">
    <property type="entry name" value="CTP_transf_like"/>
    <property type="match status" value="1"/>
</dbReference>
<dbReference type="PRINTS" id="PR01020">
    <property type="entry name" value="LPSBIOSNTHSS"/>
</dbReference>
<dbReference type="SUPFAM" id="SSF52374">
    <property type="entry name" value="Nucleotidylyl transferase"/>
    <property type="match status" value="1"/>
</dbReference>
<name>COAD_SERMA</name>
<gene>
    <name evidence="1" type="primary">coaD</name>
    <name type="synonym">kdtB</name>
</gene>
<comment type="function">
    <text evidence="1">Reversibly transfers an adenylyl group from ATP to 4'-phosphopantetheine, yielding dephospho-CoA (dPCoA) and pyrophosphate.</text>
</comment>
<comment type="catalytic activity">
    <reaction evidence="1">
        <text>(R)-4'-phosphopantetheine + ATP + H(+) = 3'-dephospho-CoA + diphosphate</text>
        <dbReference type="Rhea" id="RHEA:19801"/>
        <dbReference type="ChEBI" id="CHEBI:15378"/>
        <dbReference type="ChEBI" id="CHEBI:30616"/>
        <dbReference type="ChEBI" id="CHEBI:33019"/>
        <dbReference type="ChEBI" id="CHEBI:57328"/>
        <dbReference type="ChEBI" id="CHEBI:61723"/>
        <dbReference type="EC" id="2.7.7.3"/>
    </reaction>
</comment>
<comment type="cofactor">
    <cofactor evidence="1">
        <name>Mg(2+)</name>
        <dbReference type="ChEBI" id="CHEBI:18420"/>
    </cofactor>
</comment>
<comment type="pathway">
    <text evidence="1">Cofactor biosynthesis; coenzyme A biosynthesis; CoA from (R)-pantothenate: step 4/5.</text>
</comment>
<comment type="subunit">
    <text evidence="1">Homohexamer.</text>
</comment>
<comment type="subcellular location">
    <subcellularLocation>
        <location evidence="1">Cytoplasm</location>
    </subcellularLocation>
</comment>
<comment type="similarity">
    <text evidence="1">Belongs to the bacterial CoaD family.</text>
</comment>
<proteinExistence type="inferred from homology"/>
<accession>Q9X980</accession>
<organism>
    <name type="scientific">Serratia marcescens</name>
    <dbReference type="NCBI Taxonomy" id="615"/>
    <lineage>
        <taxon>Bacteria</taxon>
        <taxon>Pseudomonadati</taxon>
        <taxon>Pseudomonadota</taxon>
        <taxon>Gammaproteobacteria</taxon>
        <taxon>Enterobacterales</taxon>
        <taxon>Yersiniaceae</taxon>
        <taxon>Serratia</taxon>
    </lineage>
</organism>
<evidence type="ECO:0000255" key="1">
    <source>
        <dbReference type="HAMAP-Rule" id="MF_00151"/>
    </source>
</evidence>
<sequence length="161" mass="17635">MTSKAIYPGTFDPMTNGHLDLVTRASLMFDHVILAIAASPSKKPLFSLDERVALATQVTSHLDNVEVLGFSELMAHFAAHQNANILVRGLRAVSDFEYELQLANMNRHLMPTLESVFLMPSEEWSFISSSLVKEVARHGGDIAPFLPDVVTQALMAKLAAA</sequence>
<keyword id="KW-0067">ATP-binding</keyword>
<keyword id="KW-0173">Coenzyme A biosynthesis</keyword>
<keyword id="KW-0963">Cytoplasm</keyword>
<keyword id="KW-0460">Magnesium</keyword>
<keyword id="KW-0547">Nucleotide-binding</keyword>
<keyword id="KW-0548">Nucleotidyltransferase</keyword>
<keyword id="KW-0808">Transferase</keyword>
<reference key="1">
    <citation type="submission" date="1999-04" db="EMBL/GenBank/DDBJ databases">
        <title>Characterization of the waa gene cluster involved in core lipopolysaccharide biosynthesis of Serratia marcescens N28b (serotype O4).</title>
        <authorList>
            <person name="Regue M."/>
            <person name="Coderch N."/>
            <person name="Pique N."/>
            <person name="Abitiu N."/>
            <person name="Merino S."/>
            <person name="Izquierdo L."/>
            <person name="Urgell C."/>
            <person name="Tomas J.M."/>
            <person name="Regue M."/>
        </authorList>
    </citation>
    <scope>NUCLEOTIDE SEQUENCE [GENOMIC DNA]</scope>
    <source>
        <strain>N28b</strain>
    </source>
</reference>
<feature type="chain" id="PRO_0000156268" description="Phosphopantetheine adenylyltransferase">
    <location>
        <begin position="1"/>
        <end position="161"/>
    </location>
</feature>
<feature type="binding site" evidence="1">
    <location>
        <begin position="10"/>
        <end position="11"/>
    </location>
    <ligand>
        <name>ATP</name>
        <dbReference type="ChEBI" id="CHEBI:30616"/>
    </ligand>
</feature>
<feature type="binding site" evidence="1">
    <location>
        <position position="10"/>
    </location>
    <ligand>
        <name>substrate</name>
    </ligand>
</feature>
<feature type="binding site" evidence="1">
    <location>
        <position position="18"/>
    </location>
    <ligand>
        <name>ATP</name>
        <dbReference type="ChEBI" id="CHEBI:30616"/>
    </ligand>
</feature>
<feature type="binding site" evidence="1">
    <location>
        <position position="42"/>
    </location>
    <ligand>
        <name>substrate</name>
    </ligand>
</feature>
<feature type="binding site" evidence="1">
    <location>
        <position position="74"/>
    </location>
    <ligand>
        <name>substrate</name>
    </ligand>
</feature>
<feature type="binding site" evidence="1">
    <location>
        <position position="88"/>
    </location>
    <ligand>
        <name>substrate</name>
    </ligand>
</feature>
<feature type="binding site" evidence="1">
    <location>
        <begin position="89"/>
        <end position="91"/>
    </location>
    <ligand>
        <name>ATP</name>
        <dbReference type="ChEBI" id="CHEBI:30616"/>
    </ligand>
</feature>
<feature type="binding site" evidence="1">
    <location>
        <position position="99"/>
    </location>
    <ligand>
        <name>ATP</name>
        <dbReference type="ChEBI" id="CHEBI:30616"/>
    </ligand>
</feature>
<feature type="binding site" evidence="1">
    <location>
        <begin position="124"/>
        <end position="130"/>
    </location>
    <ligand>
        <name>ATP</name>
        <dbReference type="ChEBI" id="CHEBI:30616"/>
    </ligand>
</feature>
<feature type="site" description="Transition state stabilizer" evidence="1">
    <location>
        <position position="18"/>
    </location>
</feature>
<protein>
    <recommendedName>
        <fullName evidence="1">Phosphopantetheine adenylyltransferase</fullName>
        <ecNumber evidence="1">2.7.7.3</ecNumber>
    </recommendedName>
    <alternativeName>
        <fullName evidence="1">Dephospho-CoA pyrophosphorylase</fullName>
    </alternativeName>
    <alternativeName>
        <fullName evidence="1">Pantetheine-phosphate adenylyltransferase</fullName>
        <shortName evidence="1">PPAT</shortName>
    </alternativeName>
</protein>